<reference key="1">
    <citation type="journal article" date="1999" name="Infect. Immun.">
        <title>Identification of a novel mycobacterial histone H1 homologue (HupB) as an antigenic target of pANCA monoclonal antibody and serum immunoglobulin A from patients with Crohn's disease.</title>
        <authorList>
            <person name="Cohavy O."/>
            <person name="Harth G."/>
            <person name="Horwitz M."/>
            <person name="Eggena M."/>
            <person name="Landers C."/>
            <person name="Sutton C."/>
            <person name="Targan S.R."/>
            <person name="Braun J."/>
        </authorList>
    </citation>
    <scope>NUCLEOTIDE SEQUENCE [GENOMIC DNA]</scope>
    <scope>FUNCTION</scope>
    <source>
        <strain>ATCC 35801 / TMC 107 / Erdman</strain>
    </source>
</reference>
<reference key="2">
    <citation type="journal article" date="1998" name="Nature">
        <title>Deciphering the biology of Mycobacterium tuberculosis from the complete genome sequence.</title>
        <authorList>
            <person name="Cole S.T."/>
            <person name="Brosch R."/>
            <person name="Parkhill J."/>
            <person name="Garnier T."/>
            <person name="Churcher C.M."/>
            <person name="Harris D.E."/>
            <person name="Gordon S.V."/>
            <person name="Eiglmeier K."/>
            <person name="Gas S."/>
            <person name="Barry C.E. III"/>
            <person name="Tekaia F."/>
            <person name="Badcock K."/>
            <person name="Basham D."/>
            <person name="Brown D."/>
            <person name="Chillingworth T."/>
            <person name="Connor R."/>
            <person name="Davies R.M."/>
            <person name="Devlin K."/>
            <person name="Feltwell T."/>
            <person name="Gentles S."/>
            <person name="Hamlin N."/>
            <person name="Holroyd S."/>
            <person name="Hornsby T."/>
            <person name="Jagels K."/>
            <person name="Krogh A."/>
            <person name="McLean J."/>
            <person name="Moule S."/>
            <person name="Murphy L.D."/>
            <person name="Oliver S."/>
            <person name="Osborne J."/>
            <person name="Quail M.A."/>
            <person name="Rajandream M.A."/>
            <person name="Rogers J."/>
            <person name="Rutter S."/>
            <person name="Seeger K."/>
            <person name="Skelton S."/>
            <person name="Squares S."/>
            <person name="Squares R."/>
            <person name="Sulston J.E."/>
            <person name="Taylor K."/>
            <person name="Whitehead S."/>
            <person name="Barrell B.G."/>
        </authorList>
    </citation>
    <scope>NUCLEOTIDE SEQUENCE [LARGE SCALE GENOMIC DNA]</scope>
    <source>
        <strain>ATCC 25618 / H37Rv</strain>
    </source>
</reference>
<reference key="3">
    <citation type="journal article" date="2022" name="Genomics">
        <title>Deep N-terminomics of Mycobacterium tuberculosis H37Rv extensively correct annotated encoding genes.</title>
        <authorList>
            <person name="Shi J."/>
            <person name="Meng S."/>
            <person name="Wan L."/>
            <person name="Zhang Z."/>
            <person name="Jiang S."/>
            <person name="Zhu H."/>
            <person name="Dai E."/>
            <person name="Chang L."/>
            <person name="Gao H."/>
            <person name="Wan K."/>
            <person name="Zhang L."/>
            <person name="Zhao X."/>
            <person name="Liu H."/>
            <person name="Lyu Z."/>
            <person name="Zhang Y."/>
            <person name="Xu P."/>
        </authorList>
    </citation>
    <scope>PROTEIN SEQUENCE OF 2-15</scope>
    <scope>SEQUENCE REVISION TO N-TERMINUS</scope>
    <source>
        <strain>H37Rv</strain>
    </source>
</reference>
<reference key="4">
    <citation type="journal article" date="2002" name="Infect. Immun.">
        <title>Decreased infectivity despite unaltered C3 binding by a DeltahbhA mutant of Mycobacterium tuberculosis.</title>
        <authorList>
            <person name="Mueller-Ortiz S.L."/>
            <person name="Sepulveda E."/>
            <person name="Olsen M.R."/>
            <person name="Jagannath C."/>
            <person name="Wanger A.R."/>
            <person name="Norris S.J."/>
        </authorList>
    </citation>
    <scope>PROTEIN SEQUENCE OF 6-15 AND 75-87</scope>
    <source>
        <strain>ATCC 27294 / TMC 102 / H37Rv</strain>
    </source>
</reference>
<reference key="5">
    <citation type="journal article" date="2006" name="Clin. Vaccine Immunol.">
        <title>Identification and characterization of a major cell wall-associated iron-regulated envelope protein (Irep-28) in Mycobacterium tuberculosis.</title>
        <authorList>
            <person name="Yeruva V.C."/>
            <person name="Duggirala S."/>
            <person name="Lakshmi V."/>
            <person name="Kolarich D."/>
            <person name="Altmann F."/>
            <person name="Sritharan M."/>
        </authorList>
    </citation>
    <scope>PROTEIN SEQUENCE OF 22-36; 89-96 AND 97-105</scope>
    <scope>SUBCELLULAR LOCATION</scope>
    <scope>INDUCTION BY IRON</scope>
    <source>
        <strain>ATCC 27294 / TMC 102 / H37Rv</strain>
    </source>
</reference>
<reference key="6">
    <citation type="journal article" date="1998" name="Tuber. Lung Dis.">
        <title>Identification of an immunogenic histone-like protein (HLPMt) of Mycobacterium tuberculosis.</title>
        <authorList>
            <person name="Prabhakar S."/>
            <person name="Annapurna P.S."/>
            <person name="Jain N.K."/>
            <person name="Dey A.B."/>
            <person name="Tyagi J.S."/>
            <person name="Prasad H.K."/>
        </authorList>
    </citation>
    <scope>PROTEIN SEQUENCE OF 73-88</scope>
    <scope>FUNCTION</scope>
    <scope>DNA-BINDING</scope>
    <source>
        <strain>ATCC 25618 / H37Rv</strain>
    </source>
</reference>
<reference key="7">
    <citation type="journal article" date="2008" name="BMC Syst. Biol.">
        <title>targetTB: a target identification pipeline for Mycobacterium tuberculosis through an interactome, reactome and genome-scale structural analysis.</title>
        <authorList>
            <person name="Raman K."/>
            <person name="Yeturu K."/>
            <person name="Chandra N."/>
        </authorList>
    </citation>
    <scope>IDENTIFICATION AS A DRUG TARGET [LARGE SCALE ANALYSIS]</scope>
</reference>
<reference key="8">
    <citation type="journal article" date="2007" name="J. Bacteriol.">
        <title>Control of cell wall assembly by a histone-like protein in Mycobacteria.</title>
        <authorList>
            <person name="Katsube T."/>
            <person name="Matsumoto S."/>
            <person name="Takatsuka M."/>
            <person name="Okuyama M."/>
            <person name="Ozeki Y."/>
            <person name="Naito M."/>
            <person name="Nishiuchi Y."/>
            <person name="Fujiwara N."/>
            <person name="Yoshimura M."/>
            <person name="Tsuboi T."/>
            <person name="Torii M."/>
            <person name="Oshitani N."/>
            <person name="Arakawa T."/>
            <person name="Kobayashi K."/>
        </authorList>
    </citation>
    <scope>SUBUNIT</scope>
    <source>
        <strain>H37Rv</strain>
    </source>
</reference>
<reference key="9">
    <citation type="journal article" date="2010" name="PLoS ONE">
        <title>DNA clasping by mycobacterial HU: the C-terminal region of HupB mediates increased specificity of DNA binding.</title>
        <authorList>
            <person name="Kumar S."/>
            <person name="Sardesai A.A."/>
            <person name="Basu D."/>
            <person name="Muniyappa K."/>
            <person name="Hasnain S.E."/>
        </authorList>
    </citation>
    <scope>DOMAIN</scope>
    <scope>DNA-BINDING</scope>
    <source>
        <strain>ATCC 25618 / H37Rv</strain>
    </source>
</reference>
<reference key="10">
    <citation type="journal article" date="2011" name="PLoS ONE">
        <title>A histone-like protein of mycobacteria possesses ferritin superfamily protein-like activity and protects against DNA damage by Fenton reaction.</title>
        <authorList>
            <person name="Takatsuka M."/>
            <person name="Osada-Oka M."/>
            <person name="Satoh E.F."/>
            <person name="Kitadokoro K."/>
            <person name="Nishiuchi Y."/>
            <person name="Niki M."/>
            <person name="Inoue M."/>
            <person name="Iwai K."/>
            <person name="Arakawa T."/>
            <person name="Shimoji Y."/>
            <person name="Ogura H."/>
            <person name="Kobayashi K."/>
            <person name="Rambukkana A."/>
            <person name="Matsumoto S."/>
        </authorList>
    </citation>
    <scope>FUNCTION</scope>
    <scope>CATALYTIC ACTIVITY</scope>
    <scope>BIOPHYSICOCHEMICAL PROPERTIES</scope>
    <scope>FE(3+)-BINDING</scope>
    <source>
        <strain>H37Rv</strain>
    </source>
</reference>
<reference key="11">
    <citation type="journal article" date="2014" name="J. Bacteriol.">
        <title>Iron-regulated protein HupB of Mycobacterium tuberculosis positively regulates siderophore biosynthesis and is essential for growth in macrophages.</title>
        <authorList>
            <person name="Pandey S.D."/>
            <person name="Choudhury M."/>
            <person name="Yousuf S."/>
            <person name="Wheeler P.R."/>
            <person name="Gordon S.V."/>
            <person name="Ranjan A."/>
            <person name="Sritharan M."/>
        </authorList>
    </citation>
    <scope>FUNCTION IN TRANSCRIPTION REGULATION</scope>
    <scope>INDUCTION BY IRON</scope>
    <scope>DISRUPTION PHENOTYPE</scope>
    <scope>DNA-BINDING</scope>
    <source>
        <strain>H37Rv</strain>
    </source>
</reference>
<reference key="12">
    <citation type="journal article" date="2011" name="Mol. Cell. Proteomics">
        <title>Proteogenomic analysis of Mycobacterium tuberculosis by high resolution mass spectrometry.</title>
        <authorList>
            <person name="Kelkar D.S."/>
            <person name="Kumar D."/>
            <person name="Kumar P."/>
            <person name="Balakrishnan L."/>
            <person name="Muthusamy B."/>
            <person name="Yadav A.K."/>
            <person name="Shrivastava P."/>
            <person name="Marimuthu A."/>
            <person name="Anand S."/>
            <person name="Sundaram H."/>
            <person name="Kingsbury R."/>
            <person name="Harsha H.C."/>
            <person name="Nair B."/>
            <person name="Prasad T.S."/>
            <person name="Chauhan D.S."/>
            <person name="Katoch K."/>
            <person name="Katoch V.M."/>
            <person name="Kumar P."/>
            <person name="Chaerkady R."/>
            <person name="Ramachandran S."/>
            <person name="Dash D."/>
            <person name="Pandey A."/>
        </authorList>
    </citation>
    <scope>ACETYLATION [LARGE SCALE ANALYSIS] AT MET-3</scope>
    <scope>IDENTIFICATION BY MASS SPECTROMETRY [LARGE SCALE ANALYSIS]</scope>
    <source>
        <strain>ATCC 25618 / H37Rv</strain>
    </source>
</reference>
<reference key="13">
    <citation type="journal article" date="2018" name="Biochemistry">
        <title>Acetylation by Eis and Deacetylation by Rv1151c of Mycobacterium tuberculosis HupB: Biochemical and Structural Insight.</title>
        <authorList>
            <person name="Green K.D."/>
            <person name="Biswas T."/>
            <person name="Pang A.H."/>
            <person name="Willby M.J."/>
            <person name="Reed M.S."/>
            <person name="Stuchlik O."/>
            <person name="Pohl J."/>
            <person name="Posey J.E."/>
            <person name="Tsodikov O.V."/>
            <person name="Garneau-Tsodikova S."/>
        </authorList>
    </citation>
    <scope>ACETYLATION AT LYS-5; LYS-74; LYS-88; LYS-105; LYS-118; LYS-135 AND LYS-148</scope>
    <scope>DEACYLATION BY RV1151C</scope>
    <source>
        <strain>ATCC 25618 / H37Rv</strain>
    </source>
</reference>
<reference key="14">
    <citation type="journal article" date="2018" name="EMBO J.">
        <title>Histone methyltransferase SUV39H1 participates in host defense by methylating mycobacterial histone-like protein HupB.</title>
        <authorList>
            <person name="Yaseen I."/>
            <person name="Choudhury M."/>
            <person name="Sritharan M."/>
            <person name="Khosla S."/>
        </authorList>
    </citation>
    <scope>FUNCTION</scope>
    <scope>METHYLATION AT LYS-140 BY HOST SUV39H1</scope>
    <scope>DISRUPTION PHENOTYPE</scope>
    <scope>MUTAGENESIS OF LYS-140; LYS-185 AND LYS-216</scope>
    <source>
        <strain>H37Rv</strain>
    </source>
</reference>
<reference key="15">
    <citation type="journal article" date="2021" name="BioMetals">
        <title>Iron uptake and transport by the carboxymycobactin-mycobactin siderophore machinery of Mycobacterium tuberculosis is dependent on the iron-regulated protein HupB.</title>
        <authorList>
            <person name="Choudhury M."/>
            <person name="Koduru T.N."/>
            <person name="Kumar N."/>
            <person name="Salimi S."/>
            <person name="Desai K."/>
            <person name="Prabhu N.P."/>
            <person name="Sritharan M."/>
        </authorList>
    </citation>
    <scope>FUNCTION IN IRON UPTAKE</scope>
    <scope>SUBCELLULAR LOCATION</scope>
    <scope>DISRUPTION PHENOTYPE</scope>
    <source>
        <strain>ATCC 27294 / TMC 102 / H37Rv</strain>
    </source>
</reference>
<reference key="16">
    <citation type="journal article" date="2022" name="IScience">
        <title>RNase E and HupB dynamics foster mycobacterial cell homeostasis and fitness.</title>
        <authorList>
            <person name="Griego A."/>
            <person name="Douche T."/>
            <person name="Gianetto Q.G."/>
            <person name="Matondo M."/>
            <person name="Manina G."/>
        </authorList>
    </citation>
    <scope>FUNCTION</scope>
    <scope>SUBUNIT</scope>
    <scope>SUBCELLULAR LOCATION</scope>
    <source>
        <strain>ATCC 35801 / TMC 107 / Erdman</strain>
    </source>
</reference>
<reference key="17">
    <citation type="journal article" date="2022" name="Front. Microbiol.">
        <title>HupB, a nucleoid-associated protein, is critical for survival of Mycobacterium tuberculosis under host-mediated stresses and for enhanced tolerance to key first-line antibiotics.</title>
        <authorList>
            <person name="Singh N."/>
            <person name="Sharma N."/>
            <person name="Singh P."/>
            <person name="Pandey M."/>
            <person name="Ilyas M."/>
            <person name="Sisodiya L."/>
            <person name="Choudhury T."/>
            <person name="Gosain T.P."/>
            <person name="Singh R."/>
            <person name="Atmakuri K."/>
        </authorList>
    </citation>
    <scope>FUNCTION</scope>
    <scope>INDUCTION</scope>
    <scope>DISRUPTION PHENOTYPE</scope>
    <source>
        <strain>H37Rv</strain>
    </source>
</reference>
<keyword id="KW-0007">Acetylation</keyword>
<keyword id="KW-0010">Activator</keyword>
<keyword id="KW-0134">Cell wall</keyword>
<keyword id="KW-0961">Cell wall biogenesis/degradation</keyword>
<keyword id="KW-0963">Cytoplasm</keyword>
<keyword id="KW-0903">Direct protein sequencing</keyword>
<keyword id="KW-0226">DNA condensation</keyword>
<keyword id="KW-0238">DNA-binding</keyword>
<keyword id="KW-0406">Ion transport</keyword>
<keyword id="KW-0408">Iron</keyword>
<keyword id="KW-0410">Iron transport</keyword>
<keyword id="KW-0488">Methylation</keyword>
<keyword id="KW-0560">Oxidoreductase</keyword>
<keyword id="KW-1185">Reference proteome</keyword>
<keyword id="KW-0677">Repeat</keyword>
<keyword id="KW-0964">Secreted</keyword>
<keyword id="KW-0804">Transcription</keyword>
<keyword id="KW-0805">Transcription regulation</keyword>
<keyword id="KW-0813">Transport</keyword>
<keyword id="KW-0843">Virulence</keyword>
<dbReference type="EC" id="1.16.3.1" evidence="9"/>
<dbReference type="EMBL" id="AL123456">
    <property type="protein sequence ID" value="CCP45791.1"/>
    <property type="status" value="ALT_INIT"/>
    <property type="molecule type" value="Genomic_DNA"/>
</dbReference>
<dbReference type="PIR" id="G70673">
    <property type="entry name" value="G70673"/>
</dbReference>
<dbReference type="RefSeq" id="NP_217502.1">
    <property type="nucleotide sequence ID" value="NC_000962.3"/>
</dbReference>
<dbReference type="SMR" id="P9WMK7"/>
<dbReference type="MINT" id="P9WMK7"/>
<dbReference type="STRING" id="83332.Rv2986c"/>
<dbReference type="iPTMnet" id="P9WMK7"/>
<dbReference type="PaxDb" id="83332-Rv2986c"/>
<dbReference type="DNASU" id="888166"/>
<dbReference type="GeneID" id="888166"/>
<dbReference type="KEGG" id="mtu:Rv2986c"/>
<dbReference type="TubercuList" id="Rv2986c"/>
<dbReference type="eggNOG" id="COG0776">
    <property type="taxonomic scope" value="Bacteria"/>
</dbReference>
<dbReference type="InParanoid" id="P9WMK7"/>
<dbReference type="OrthoDB" id="9799835at2"/>
<dbReference type="Proteomes" id="UP000001584">
    <property type="component" value="Chromosome"/>
</dbReference>
<dbReference type="CollecTF" id="EXPREG_00000c50"/>
<dbReference type="GO" id="GO:0005829">
    <property type="term" value="C:cytosol"/>
    <property type="evidence" value="ECO:0000318"/>
    <property type="project" value="GO_Central"/>
</dbReference>
<dbReference type="GO" id="GO:0005576">
    <property type="term" value="C:extracellular region"/>
    <property type="evidence" value="ECO:0007669"/>
    <property type="project" value="UniProtKB-KW"/>
</dbReference>
<dbReference type="GO" id="GO:0009295">
    <property type="term" value="C:nucleoid"/>
    <property type="evidence" value="ECO:0007669"/>
    <property type="project" value="UniProtKB-SubCell"/>
</dbReference>
<dbReference type="GO" id="GO:0009274">
    <property type="term" value="C:peptidoglycan-based cell wall"/>
    <property type="evidence" value="ECO:0007005"/>
    <property type="project" value="MTBBASE"/>
</dbReference>
<dbReference type="GO" id="GO:0005886">
    <property type="term" value="C:plasma membrane"/>
    <property type="evidence" value="ECO:0007005"/>
    <property type="project" value="MTBBASE"/>
</dbReference>
<dbReference type="GO" id="GO:0032993">
    <property type="term" value="C:protein-DNA complex"/>
    <property type="evidence" value="ECO:0000353"/>
    <property type="project" value="CollecTF"/>
</dbReference>
<dbReference type="GO" id="GO:0003684">
    <property type="term" value="F:damaged DNA binding"/>
    <property type="evidence" value="ECO:0000314"/>
    <property type="project" value="MTBBASE"/>
</dbReference>
<dbReference type="GO" id="GO:0003677">
    <property type="term" value="F:DNA binding"/>
    <property type="evidence" value="ECO:0000318"/>
    <property type="project" value="GO_Central"/>
</dbReference>
<dbReference type="GO" id="GO:0001216">
    <property type="term" value="F:DNA-binding transcription activator activity"/>
    <property type="evidence" value="ECO:0000353"/>
    <property type="project" value="CollecTF"/>
</dbReference>
<dbReference type="GO" id="GO:0003690">
    <property type="term" value="F:double-stranded DNA binding"/>
    <property type="evidence" value="ECO:0000314"/>
    <property type="project" value="MTBBASE"/>
</dbReference>
<dbReference type="GO" id="GO:0008199">
    <property type="term" value="F:ferric iron binding"/>
    <property type="evidence" value="ECO:0000314"/>
    <property type="project" value="UniProtKB"/>
</dbReference>
<dbReference type="GO" id="GO:0004322">
    <property type="term" value="F:ferroxidase activity"/>
    <property type="evidence" value="ECO:0000314"/>
    <property type="project" value="UniProtKB"/>
</dbReference>
<dbReference type="GO" id="GO:0030527">
    <property type="term" value="F:structural constituent of chromatin"/>
    <property type="evidence" value="ECO:0007669"/>
    <property type="project" value="InterPro"/>
</dbReference>
<dbReference type="GO" id="GO:0097100">
    <property type="term" value="F:supercoiled DNA binding"/>
    <property type="evidence" value="ECO:0000314"/>
    <property type="project" value="MTBBASE"/>
</dbReference>
<dbReference type="GO" id="GO:0000976">
    <property type="term" value="F:transcription cis-regulatory region binding"/>
    <property type="evidence" value="ECO:0000353"/>
    <property type="project" value="CollecTF"/>
</dbReference>
<dbReference type="GO" id="GO:0098785">
    <property type="term" value="P:biofilm matrix assembly"/>
    <property type="evidence" value="ECO:0000314"/>
    <property type="project" value="UniProtKB"/>
</dbReference>
<dbReference type="GO" id="GO:0071555">
    <property type="term" value="P:cell wall organization"/>
    <property type="evidence" value="ECO:0007669"/>
    <property type="project" value="UniProtKB-KW"/>
</dbReference>
<dbReference type="GO" id="GO:0010106">
    <property type="term" value="P:cellular response to iron ion starvation"/>
    <property type="evidence" value="ECO:0000270"/>
    <property type="project" value="MTBBASE"/>
</dbReference>
<dbReference type="GO" id="GO:0030261">
    <property type="term" value="P:chromosome condensation"/>
    <property type="evidence" value="ECO:0007669"/>
    <property type="project" value="UniProtKB-KW"/>
</dbReference>
<dbReference type="GO" id="GO:0042262">
    <property type="term" value="P:DNA protection"/>
    <property type="evidence" value="ECO:0000314"/>
    <property type="project" value="MTBBASE"/>
</dbReference>
<dbReference type="GO" id="GO:0006826">
    <property type="term" value="P:iron ion transport"/>
    <property type="evidence" value="ECO:0007669"/>
    <property type="project" value="UniProtKB-KW"/>
</dbReference>
<dbReference type="GO" id="GO:0090143">
    <property type="term" value="P:nucleoid organization"/>
    <property type="evidence" value="ECO:0000314"/>
    <property type="project" value="MTBBASE"/>
</dbReference>
<dbReference type="GO" id="GO:0045893">
    <property type="term" value="P:positive regulation of DNA-templated transcription"/>
    <property type="evidence" value="ECO:0000269"/>
    <property type="project" value="CollecTF"/>
</dbReference>
<dbReference type="CDD" id="cd13831">
    <property type="entry name" value="HU"/>
    <property type="match status" value="1"/>
</dbReference>
<dbReference type="FunFam" id="4.10.520.10:FF:000006">
    <property type="entry name" value="DNA-binding protein HU"/>
    <property type="match status" value="1"/>
</dbReference>
<dbReference type="Gene3D" id="4.10.520.10">
    <property type="entry name" value="IHF-like DNA-binding proteins"/>
    <property type="match status" value="1"/>
</dbReference>
<dbReference type="InterPro" id="IPR000119">
    <property type="entry name" value="Hist_DNA-bd"/>
</dbReference>
<dbReference type="InterPro" id="IPR020816">
    <property type="entry name" value="Histone-like_DNA-bd_CS"/>
</dbReference>
<dbReference type="InterPro" id="IPR010992">
    <property type="entry name" value="IHF-like_DNA-bd_dom_sf"/>
</dbReference>
<dbReference type="PANTHER" id="PTHR33175">
    <property type="entry name" value="DNA-BINDING PROTEIN HU"/>
    <property type="match status" value="1"/>
</dbReference>
<dbReference type="PANTHER" id="PTHR33175:SF3">
    <property type="entry name" value="DNA-BINDING PROTEIN HU-BETA"/>
    <property type="match status" value="1"/>
</dbReference>
<dbReference type="Pfam" id="PF00216">
    <property type="entry name" value="Bac_DNA_binding"/>
    <property type="match status" value="1"/>
</dbReference>
<dbReference type="PRINTS" id="PR01727">
    <property type="entry name" value="DNABINDINGHU"/>
</dbReference>
<dbReference type="SMART" id="SM00411">
    <property type="entry name" value="BHL"/>
    <property type="match status" value="1"/>
</dbReference>
<dbReference type="SUPFAM" id="SSF47729">
    <property type="entry name" value="IHF-like DNA-binding proteins"/>
    <property type="match status" value="1"/>
</dbReference>
<dbReference type="PROSITE" id="PS00045">
    <property type="entry name" value="HISTONE_LIKE"/>
    <property type="match status" value="1"/>
</dbReference>
<feature type="initiator methionine" description="Removed" evidence="15">
    <location>
        <position position="1"/>
    </location>
</feature>
<feature type="chain" id="PRO_0000104950" description="DNA-binding protein HupB">
    <location>
        <begin position="2"/>
        <end position="216"/>
    </location>
</feature>
<feature type="propeptide" id="PRO_0000455388" description="Removed; alternate" evidence="10">
    <location>
        <position position="2"/>
    </location>
</feature>
<feature type="chain" id="PRO_0000455389" description="DNA-binding protein HupB, propeptide removed">
    <location>
        <begin position="3"/>
        <end position="216"/>
    </location>
</feature>
<feature type="region of interest" description="Bacterial histone-like domain">
    <location>
        <begin position="3"/>
        <end position="92"/>
    </location>
</feature>
<feature type="region of interest" description="Disordered" evidence="3">
    <location>
        <begin position="102"/>
        <end position="216"/>
    </location>
</feature>
<feature type="region of interest" description="Degenerate repeats region">
    <location>
        <begin position="103"/>
        <end position="216"/>
    </location>
</feature>
<feature type="compositionally biased region" description="Low complexity" evidence="3">
    <location>
        <begin position="104"/>
        <end position="114"/>
    </location>
</feature>
<feature type="compositionally biased region" description="Basic residues" evidence="3">
    <location>
        <begin position="115"/>
        <end position="216"/>
    </location>
</feature>
<feature type="modified residue" description="N-acetylmethionine" evidence="28">
    <location>
        <position position="3"/>
    </location>
</feature>
<feature type="modified residue" description="N6-acetyllysine" evidence="26">
    <location>
        <position position="5"/>
    </location>
</feature>
<feature type="modified residue" description="N6-acetyllysine" evidence="26">
    <location>
        <position position="74"/>
    </location>
</feature>
<feature type="modified residue" description="N6-acetyllysine" evidence="26">
    <location>
        <position position="88"/>
    </location>
</feature>
<feature type="modified residue" description="N6-acetyllysine" evidence="26">
    <location>
        <position position="105"/>
    </location>
</feature>
<feature type="modified residue" description="N6-acetyllysine" evidence="26">
    <location>
        <position position="118"/>
    </location>
</feature>
<feature type="modified residue" description="N6-acetyllysine" evidence="26">
    <location>
        <position position="135"/>
    </location>
</feature>
<feature type="modified residue" description="N6,N6,N6-trimethyllysine" evidence="25">
    <location>
        <position position="140"/>
    </location>
</feature>
<feature type="modified residue" description="N6-acetyllysine" evidence="26">
    <location>
        <position position="148"/>
    </location>
</feature>
<feature type="modified residue" description="N6-acetyllysine" evidence="1">
    <location>
        <position position="169"/>
    </location>
</feature>
<feature type="mutagenesis site" description="Significantly decreased trimethylation of HupB by host SUV39H1, increased bacterial survival in human macrophages, SUV39H1 no longer inhibits biofilm formation." evidence="12">
    <original>K</original>
    <variation>A</variation>
    <location>
        <position position="140"/>
    </location>
</feature>
<feature type="mutagenesis site" description="No change in trimethylation by human SUV39H1." evidence="12">
    <original>K</original>
    <variation>A</variation>
    <location>
        <position position="185"/>
    </location>
</feature>
<feature type="mutagenesis site" description="No change in trimethylation by human SUV39H1." evidence="12">
    <original>K</original>
    <variation>A</variation>
    <location>
        <position position="216"/>
    </location>
</feature>
<feature type="sequence conflict" description="In Ref. 1; no nucleotide entry." evidence="23" ref="1">
    <original>T</original>
    <variation>A</variation>
    <location>
        <position position="210"/>
    </location>
</feature>
<sequence>MGMNKAELIDVLTQKLGSDRRQATAAVENVVDTIVRAVHKGDSVTITGFGVFEQRRRAARVARNPRTGETVKVKPTSVPAFRPGAQFKAVVSGAQRLPAEGPAVKRGVGASAAKKVAKKAPAKKATKAAKKAATKAPARKAATKAPAKKAATKAPAKKAVKATKSPAKKVTKAVKKTAVKASVRKAATKAPAKKAAAKRPATKAPAKKATARRGRK</sequence>
<proteinExistence type="evidence at protein level"/>
<organism>
    <name type="scientific">Mycobacterium tuberculosis (strain ATCC 25618 / H37Rv)</name>
    <dbReference type="NCBI Taxonomy" id="83332"/>
    <lineage>
        <taxon>Bacteria</taxon>
        <taxon>Bacillati</taxon>
        <taxon>Actinomycetota</taxon>
        <taxon>Actinomycetes</taxon>
        <taxon>Mycobacteriales</taxon>
        <taxon>Mycobacteriaceae</taxon>
        <taxon>Mycobacterium</taxon>
        <taxon>Mycobacterium tuberculosis complex</taxon>
    </lineage>
</organism>
<protein>
    <recommendedName>
        <fullName evidence="23">DNA-binding protein HupB</fullName>
        <shortName evidence="18">HupB</shortName>
        <ecNumber evidence="9">1.16.3.1</ecNumber>
    </recommendedName>
    <alternativeName>
        <fullName evidence="20">28 kDa iron-regulated protein</fullName>
        <shortName evidence="20">Irep-28</shortName>
    </alternativeName>
    <alternativeName>
        <fullName>DNA-binding protein HU homolog</fullName>
    </alternativeName>
    <alternativeName>
        <fullName evidence="18">Histone H1 homolog</fullName>
    </alternativeName>
    <alternativeName>
        <fullName evidence="19">Histone-like protein</fullName>
        <shortName evidence="19">HLPMt</shortName>
        <shortName evidence="19">Hlp</shortName>
    </alternativeName>
    <alternativeName>
        <fullName evidence="21">Nucleoid-associated protein HU</fullName>
    </alternativeName>
    <component>
        <recommendedName>
            <fullName>DNA-binding protein HupB, propeptide removed</fullName>
        </recommendedName>
    </component>
</protein>
<comment type="function">
    <text evidence="1 5 8 11 16 17">A nucleoid-associated protein (NAP) that probably plays a role in chromosome compactation. Binds DNA non-specifically, with greater affinity for supercoiled than linear DNA, binds well to nicked DNA, gapped and cruciform DNA. Has a preference for A:T rich DNA (PubMed:10645441, PubMed:20824060). Required for activation of the mtbB operon. Binds the mtbB promoter in the presence of iron, binding is seen with as little as 25 uM Fe(2+) and increases with increasing Fe(2+) (PubMed:24610707). RNase E and HupB jointly contribute to cellular adaptation to changing growth conditions and survival during antibiotic treatment and in the host (PubMed:35521527). Plays a role in stress survival (PubMed:36071978). Stimulates supercoiling relaxation by topoisomerase 1 (Top1, topA) (By similarity).</text>
</comment>
<comment type="function">
    <text evidence="9 14">Binds Fe(3+) but not Fe(2+). Has ferroxidase activity, converts Fe(2+) into Fe(3+) and in the presence of H(2)O(2) prevents the generation of hydroxyl radicals (the Fenton reaction). Protects DNA from damage in the presence of FeSO(4) and H(2)O(2). May function in iron storage (PubMed:21698192). Involved in iron uptake by bacteria (either Fe(3+) or extracellular carboxymycobactin); antibodies against HupB block uptake of both. Following uptake iron is mostly found in the iron siderophores carboxymycobactin (CMb, extracellular) or mycobactin (Mb, lipophilic). Facilitates transfer of iron from CMb to Mb when liposomes plus a cell wall lysate are incubated with CMb. Binds iron, ferri-CMb and ferri-Mb; has 10-fold higher affinity for ferri-Mb. Suggested to transfer iron from CBm to Mb at the cell membrane (PubMed:33609202).</text>
</comment>
<comment type="function">
    <text evidence="4 5 12">Required for biofilm formation; trimethylation by recombinant human SUV39H1 (a histone methyltransferase) inhibits biofilm formation (PubMed:29170282). Induces lymphoproliferation, particularly in health tuberculin reactors, and is immunogenic (PubMed:10645441). Maybe involved in pathogenesis of inflammatory bowel disease (IBD) in patients with ulcerative colitis and Crohn disease (CD). Bound by anti-neutrophil cytoplasmic antibodies (pANCA), which are a hallmark of IBD. The binding is due to pANCA directed against H1-3 cross-reacting with DBH epitopes. In CD, target of a strong IgA response (PubMed:10569769).</text>
</comment>
<comment type="function">
    <text evidence="24">May play a role in cell wall assembly (Probable) (PubMed:17873049). In vitro at low levels enhances formation of TMM and TDM by antigen 85 proteins (fbpA, fbpB, fbpC), at higher levels inhibits TMM and TDM formation (Probable) (PubMed:17873049).</text>
</comment>
<comment type="catalytic activity">
    <reaction evidence="9">
        <text>4 Fe(2+) + O2 + 4 H(+) = 4 Fe(3+) + 2 H2O</text>
        <dbReference type="Rhea" id="RHEA:11148"/>
        <dbReference type="ChEBI" id="CHEBI:15377"/>
        <dbReference type="ChEBI" id="CHEBI:15378"/>
        <dbReference type="ChEBI" id="CHEBI:15379"/>
        <dbReference type="ChEBI" id="CHEBI:29033"/>
        <dbReference type="ChEBI" id="CHEBI:29034"/>
        <dbReference type="EC" id="1.16.3.1"/>
    </reaction>
    <physiologicalReaction direction="left-to-right" evidence="9">
        <dbReference type="Rhea" id="RHEA:11149"/>
    </physiologicalReaction>
</comment>
<comment type="biophysicochemical properties">
    <kinetics>
        <KM evidence="9">0.252 mM for Fe(2+)</KM>
    </kinetics>
</comment>
<comment type="subunit">
    <text evidence="1 2 24">Oligomerizes (By similarity). Interacts with topoisomerase 1 (topA) (By similarity). Interacts with Eis (By similarity). Interacts with antigen 85 proteins (fbpA, fbpB, fbpC) (Probable) (PubMed:17873049).</text>
</comment>
<comment type="subcellular location">
    <subcellularLocation>
        <location evidence="27">Cytoplasm</location>
        <location evidence="27">Nucleoid</location>
    </subcellularLocation>
    <subcellularLocation>
        <location evidence="6 14">Secreted</location>
        <location evidence="6 14">Cell wall</location>
    </subcellularLocation>
    <text evidence="14 16">Found along the cell length in a bead-like pattern (probably associated with DNA) (PubMed:35521527). Only seen in the cell wall when grown under low iron conditions (PubMed:33609202).</text>
</comment>
<comment type="induction">
    <text evidence="6 11 17">Increased expression under iron limitation (at protein level) (PubMed:17028216, PubMed:24610707). Expressed at all growth phases in rich and minial medium; more protein in mid- to late-log and stationary phases (at protein level). Increased expression under oxidative stress or growth on isoniazid (INH), decreased expression under nitrosative or acidic stress, or growth on rifampicin (at protein level) (PubMed:36071978).</text>
</comment>
<comment type="domain">
    <text evidence="1 8">The highly basic C-terminus confers greater specificity in DNA binding to all tested dsDNA (PubMed:20824060). Residues 1-102 stimulate Top1 and physically interact with it (By similarity).</text>
</comment>
<comment type="PTM">
    <text evidence="1 13">Probably acetylated by Eis in vivo (By similarity). In vitro acetylated by Eis (strain H37Rv and H37Ra) on many more residues than those identified in vivo (PubMed:29345920). Deacetylated in vitro by NAD-dependent protein deacylase (Rv1151c) (PubMed:29345920).</text>
</comment>
<comment type="PTM">
    <text evidence="12">Trimethylated on Lys-140 by human SUV39H1; trimethylation inhibits mycobacterial growth. SUV39H1 probably also trimethylates another residue (PubMed:29170282).</text>
</comment>
<comment type="PTM">
    <text evidence="1">Probably succinylated by Rv0802c and desuccinylated by NAD-dependent protein deacylase (Rv1151c).</text>
</comment>
<comment type="disruption phenotype">
    <text evidence="11 12 14 17">Pronounced lag-phase during growth; the lag is greater in low iron conditions (0.02 ug Fe/ml). 3 to 5-fold decreases in expression of iron siderophores mycobactin and carboxymycobactin in low iron media. Altered expression of a number of genes, including decreased expression of some involved in iron homeostasis (PubMed:24610707). Bacteria do not take up iron either as Fe(3+) or as carboxymycobactin (PubMed:33609202). Bacteria do not survive in mouse macrophages (PubMed:24610707, PubMed:29170282). Does not form biofilm (PubMed:29170282). Much slower growth in rich medium, greatly increased sensitivity to all stresses, death at low pH, oxidative and nitrosative stress, greatly decreased uptake by and survival in human macrophages, increased sensitivity to INH and rifampicin, greatly increased sensitivity to 0.05% SDS, enhanced permeability of the cell membrane due to decreased expression of polyketide synthases including ppsA, ppsC, and ppsE, downregulates DrrA efflux pump expression (PubMed:36071978).</text>
</comment>
<comment type="miscellaneous">
    <text evidence="7">Was identified as a high-confidence drug target.</text>
</comment>
<comment type="similarity">
    <text evidence="23">Belongs to the bacterial histone-like protein family. Long actinobacterial subfamily.</text>
</comment>
<comment type="caution">
    <text evidence="15">The revised start codon for the 216-residue version of this protein is GTT.</text>
</comment>
<comment type="sequence caution" evidence="15">
    <conflict type="erroneous initiation">
        <sequence resource="EMBL-CDS" id="CCP45791"/>
    </conflict>
    <text>Truncated N-terminus.</text>
</comment>
<evidence type="ECO:0000250" key="1">
    <source>
        <dbReference type="UniProtKB" id="A5U6Z7"/>
    </source>
</evidence>
<evidence type="ECO:0000250" key="2">
    <source>
        <dbReference type="UniProtKB" id="Q9XB18"/>
    </source>
</evidence>
<evidence type="ECO:0000256" key="3">
    <source>
        <dbReference type="SAM" id="MobiDB-lite"/>
    </source>
</evidence>
<evidence type="ECO:0000269" key="4">
    <source>
    </source>
</evidence>
<evidence type="ECO:0000269" key="5">
    <source>
    </source>
</evidence>
<evidence type="ECO:0000269" key="6">
    <source>
    </source>
</evidence>
<evidence type="ECO:0000269" key="7">
    <source>
    </source>
</evidence>
<evidence type="ECO:0000269" key="8">
    <source>
    </source>
</evidence>
<evidence type="ECO:0000269" key="9">
    <source>
    </source>
</evidence>
<evidence type="ECO:0000269" key="10">
    <source>
    </source>
</evidence>
<evidence type="ECO:0000269" key="11">
    <source>
    </source>
</evidence>
<evidence type="ECO:0000269" key="12">
    <source>
    </source>
</evidence>
<evidence type="ECO:0000269" key="13">
    <source>
    </source>
</evidence>
<evidence type="ECO:0000269" key="14">
    <source>
    </source>
</evidence>
<evidence type="ECO:0000269" key="15">
    <source>
    </source>
</evidence>
<evidence type="ECO:0000269" key="16">
    <source>
    </source>
</evidence>
<evidence type="ECO:0000269" key="17">
    <source>
    </source>
</evidence>
<evidence type="ECO:0000303" key="18">
    <source>
    </source>
</evidence>
<evidence type="ECO:0000303" key="19">
    <source>
    </source>
</evidence>
<evidence type="ECO:0000303" key="20">
    <source>
    </source>
</evidence>
<evidence type="ECO:0000303" key="21">
    <source>
    </source>
</evidence>
<evidence type="ECO:0000303" key="22">
    <source>
    </source>
</evidence>
<evidence type="ECO:0000305" key="23"/>
<evidence type="ECO:0000305" key="24">
    <source>
    </source>
</evidence>
<evidence type="ECO:0000305" key="25">
    <source>
    </source>
</evidence>
<evidence type="ECO:0000305" key="26">
    <source>
    </source>
</evidence>
<evidence type="ECO:0000305" key="27">
    <source>
    </source>
</evidence>
<evidence type="ECO:0007744" key="28">
    <source>
    </source>
</evidence>
<name>DBH_MYCTU</name>
<gene>
    <name evidence="22" type="primary">hupB</name>
    <name evidence="19" type="synonym">hlp</name>
    <name type="synonym">hup</name>
    <name type="synonym">lbp21</name>
    <name evidence="22" type="ordered locus">Rv2986c</name>
    <name type="ORF">MTCY349.01</name>
</gene>
<accession>P9WMK7</accession>
<accession>L0TBG2</accession>
<accession>P95109</accession>